<name>Y2961_BACCZ</name>
<organism>
    <name type="scientific">Bacillus cereus (strain ZK / E33L)</name>
    <dbReference type="NCBI Taxonomy" id="288681"/>
    <lineage>
        <taxon>Bacteria</taxon>
        <taxon>Bacillati</taxon>
        <taxon>Bacillota</taxon>
        <taxon>Bacilli</taxon>
        <taxon>Bacillales</taxon>
        <taxon>Bacillaceae</taxon>
        <taxon>Bacillus</taxon>
        <taxon>Bacillus cereus group</taxon>
    </lineage>
</organism>
<feature type="chain" id="PRO_0000294490" description="UPF0457 protein BCE33L2961">
    <location>
        <begin position="1"/>
        <end position="84"/>
    </location>
</feature>
<dbReference type="EMBL" id="CP000001">
    <property type="protein sequence ID" value="AAU17301.1"/>
    <property type="status" value="ALT_INIT"/>
    <property type="molecule type" value="Genomic_DNA"/>
</dbReference>
<dbReference type="RefSeq" id="WP_012680263.1">
    <property type="nucleotide sequence ID" value="NZ_CP009968.1"/>
</dbReference>
<dbReference type="KEGG" id="bcz:BCE33L2961"/>
<dbReference type="PATRIC" id="fig|288681.22.peg.2486"/>
<dbReference type="Proteomes" id="UP000002612">
    <property type="component" value="Chromosome"/>
</dbReference>
<dbReference type="InterPro" id="IPR055365">
    <property type="entry name" value="PH_SunI-like"/>
</dbReference>
<dbReference type="Pfam" id="PF23491">
    <property type="entry name" value="bPH_8"/>
    <property type="match status" value="1"/>
</dbReference>
<accession>Q638W9</accession>
<comment type="similarity">
    <text evidence="1">Belongs to the UPF0457 family.</text>
</comment>
<comment type="sequence caution" evidence="1">
    <conflict type="erroneous initiation">
        <sequence resource="EMBL-CDS" id="AAU17301"/>
    </conflict>
</comment>
<evidence type="ECO:0000305" key="1"/>
<protein>
    <recommendedName>
        <fullName>UPF0457 protein BCE33L2961</fullName>
    </recommendedName>
</protein>
<sequence>MLGIDVKKTNEELIISWQIAKVQIPLSEIIEVTEDETYAGVEEENVIRIGTAYATTDRILIRTVKQNYLLFTTNKVAILNKINA</sequence>
<proteinExistence type="inferred from homology"/>
<reference key="1">
    <citation type="journal article" date="2006" name="J. Bacteriol.">
        <title>Pathogenomic sequence analysis of Bacillus cereus and Bacillus thuringiensis isolates closely related to Bacillus anthracis.</title>
        <authorList>
            <person name="Han C.S."/>
            <person name="Xie G."/>
            <person name="Challacombe J.F."/>
            <person name="Altherr M.R."/>
            <person name="Bhotika S.S."/>
            <person name="Bruce D."/>
            <person name="Campbell C.S."/>
            <person name="Campbell M.L."/>
            <person name="Chen J."/>
            <person name="Chertkov O."/>
            <person name="Cleland C."/>
            <person name="Dimitrijevic M."/>
            <person name="Doggett N.A."/>
            <person name="Fawcett J.J."/>
            <person name="Glavina T."/>
            <person name="Goodwin L.A."/>
            <person name="Hill K.K."/>
            <person name="Hitchcock P."/>
            <person name="Jackson P.J."/>
            <person name="Keim P."/>
            <person name="Kewalramani A.R."/>
            <person name="Longmire J."/>
            <person name="Lucas S."/>
            <person name="Malfatti S."/>
            <person name="McMurry K."/>
            <person name="Meincke L.J."/>
            <person name="Misra M."/>
            <person name="Moseman B.L."/>
            <person name="Mundt M."/>
            <person name="Munk A.C."/>
            <person name="Okinaka R.T."/>
            <person name="Parson-Quintana B."/>
            <person name="Reilly L.P."/>
            <person name="Richardson P."/>
            <person name="Robinson D.L."/>
            <person name="Rubin E."/>
            <person name="Saunders E."/>
            <person name="Tapia R."/>
            <person name="Tesmer J.G."/>
            <person name="Thayer N."/>
            <person name="Thompson L.S."/>
            <person name="Tice H."/>
            <person name="Ticknor L.O."/>
            <person name="Wills P.L."/>
            <person name="Brettin T.S."/>
            <person name="Gilna P."/>
        </authorList>
    </citation>
    <scope>NUCLEOTIDE SEQUENCE [LARGE SCALE GENOMIC DNA]</scope>
    <source>
        <strain>ZK / E33L</strain>
    </source>
</reference>
<gene>
    <name type="ordered locus">BCE33L2961</name>
</gene>